<feature type="chain" id="PRO_1000064059" description="2,3-bisphosphoglycerate-dependent phosphoglycerate mutase">
    <location>
        <begin position="1"/>
        <end position="250"/>
    </location>
</feature>
<feature type="active site" description="Tele-phosphohistidine intermediate" evidence="1">
    <location>
        <position position="11"/>
    </location>
</feature>
<feature type="active site" description="Proton donor/acceptor" evidence="1">
    <location>
        <position position="89"/>
    </location>
</feature>
<feature type="binding site" evidence="1">
    <location>
        <begin position="10"/>
        <end position="17"/>
    </location>
    <ligand>
        <name>substrate</name>
    </ligand>
</feature>
<feature type="binding site" evidence="1">
    <location>
        <begin position="23"/>
        <end position="24"/>
    </location>
    <ligand>
        <name>substrate</name>
    </ligand>
</feature>
<feature type="binding site" evidence="1">
    <location>
        <position position="62"/>
    </location>
    <ligand>
        <name>substrate</name>
    </ligand>
</feature>
<feature type="binding site" evidence="1">
    <location>
        <begin position="89"/>
        <end position="92"/>
    </location>
    <ligand>
        <name>substrate</name>
    </ligand>
</feature>
<feature type="binding site" evidence="1">
    <location>
        <position position="100"/>
    </location>
    <ligand>
        <name>substrate</name>
    </ligand>
</feature>
<feature type="binding site" evidence="1">
    <location>
        <begin position="116"/>
        <end position="117"/>
    </location>
    <ligand>
        <name>substrate</name>
    </ligand>
</feature>
<feature type="binding site" evidence="1">
    <location>
        <begin position="185"/>
        <end position="186"/>
    </location>
    <ligand>
        <name>substrate</name>
    </ligand>
</feature>
<feature type="site" description="Transition state stabilizer" evidence="1">
    <location>
        <position position="184"/>
    </location>
</feature>
<dbReference type="EC" id="5.4.2.11" evidence="1"/>
<dbReference type="EMBL" id="CP000783">
    <property type="protein sequence ID" value="ABU77835.1"/>
    <property type="molecule type" value="Genomic_DNA"/>
</dbReference>
<dbReference type="RefSeq" id="WP_004386744.1">
    <property type="nucleotide sequence ID" value="NC_009778.1"/>
</dbReference>
<dbReference type="SMR" id="A7MIX7"/>
<dbReference type="GeneID" id="56731389"/>
<dbReference type="KEGG" id="esa:ESA_02590"/>
<dbReference type="HOGENOM" id="CLU_033323_1_1_6"/>
<dbReference type="UniPathway" id="UPA00109">
    <property type="reaction ID" value="UER00186"/>
</dbReference>
<dbReference type="Proteomes" id="UP000000260">
    <property type="component" value="Chromosome"/>
</dbReference>
<dbReference type="GO" id="GO:0004619">
    <property type="term" value="F:phosphoglycerate mutase activity"/>
    <property type="evidence" value="ECO:0007669"/>
    <property type="project" value="UniProtKB-EC"/>
</dbReference>
<dbReference type="GO" id="GO:0006094">
    <property type="term" value="P:gluconeogenesis"/>
    <property type="evidence" value="ECO:0007669"/>
    <property type="project" value="UniProtKB-UniRule"/>
</dbReference>
<dbReference type="GO" id="GO:0006096">
    <property type="term" value="P:glycolytic process"/>
    <property type="evidence" value="ECO:0007669"/>
    <property type="project" value="UniProtKB-UniRule"/>
</dbReference>
<dbReference type="CDD" id="cd07067">
    <property type="entry name" value="HP_PGM_like"/>
    <property type="match status" value="1"/>
</dbReference>
<dbReference type="FunFam" id="3.40.50.1240:FF:000003">
    <property type="entry name" value="2,3-bisphosphoglycerate-dependent phosphoglycerate mutase"/>
    <property type="match status" value="1"/>
</dbReference>
<dbReference type="Gene3D" id="3.40.50.1240">
    <property type="entry name" value="Phosphoglycerate mutase-like"/>
    <property type="match status" value="1"/>
</dbReference>
<dbReference type="HAMAP" id="MF_01039">
    <property type="entry name" value="PGAM_GpmA"/>
    <property type="match status" value="1"/>
</dbReference>
<dbReference type="InterPro" id="IPR013078">
    <property type="entry name" value="His_Pase_superF_clade-1"/>
</dbReference>
<dbReference type="InterPro" id="IPR029033">
    <property type="entry name" value="His_PPase_superfam"/>
</dbReference>
<dbReference type="InterPro" id="IPR001345">
    <property type="entry name" value="PG/BPGM_mutase_AS"/>
</dbReference>
<dbReference type="InterPro" id="IPR005952">
    <property type="entry name" value="Phosphogly_mut1"/>
</dbReference>
<dbReference type="NCBIfam" id="TIGR01258">
    <property type="entry name" value="pgm_1"/>
    <property type="match status" value="1"/>
</dbReference>
<dbReference type="NCBIfam" id="NF010713">
    <property type="entry name" value="PRK14115.1"/>
    <property type="match status" value="1"/>
</dbReference>
<dbReference type="PANTHER" id="PTHR11931">
    <property type="entry name" value="PHOSPHOGLYCERATE MUTASE"/>
    <property type="match status" value="1"/>
</dbReference>
<dbReference type="Pfam" id="PF00300">
    <property type="entry name" value="His_Phos_1"/>
    <property type="match status" value="1"/>
</dbReference>
<dbReference type="PIRSF" id="PIRSF000709">
    <property type="entry name" value="6PFK_2-Ptase"/>
    <property type="match status" value="1"/>
</dbReference>
<dbReference type="SMART" id="SM00855">
    <property type="entry name" value="PGAM"/>
    <property type="match status" value="1"/>
</dbReference>
<dbReference type="SUPFAM" id="SSF53254">
    <property type="entry name" value="Phosphoglycerate mutase-like"/>
    <property type="match status" value="1"/>
</dbReference>
<dbReference type="PROSITE" id="PS00175">
    <property type="entry name" value="PG_MUTASE"/>
    <property type="match status" value="1"/>
</dbReference>
<protein>
    <recommendedName>
        <fullName evidence="1">2,3-bisphosphoglycerate-dependent phosphoglycerate mutase</fullName>
        <shortName evidence="1">BPG-dependent PGAM</shortName>
        <shortName evidence="1">PGAM</shortName>
        <shortName evidence="1">Phosphoglyceromutase</shortName>
        <shortName evidence="1">dPGM</shortName>
        <ecNumber evidence="1">5.4.2.11</ecNumber>
    </recommendedName>
</protein>
<reference key="1">
    <citation type="journal article" date="2010" name="PLoS ONE">
        <title>Genome sequence of Cronobacter sakazakii BAA-894 and comparative genomic hybridization analysis with other Cronobacter species.</title>
        <authorList>
            <person name="Kucerova E."/>
            <person name="Clifton S.W."/>
            <person name="Xia X.Q."/>
            <person name="Long F."/>
            <person name="Porwollik S."/>
            <person name="Fulton L."/>
            <person name="Fronick C."/>
            <person name="Minx P."/>
            <person name="Kyung K."/>
            <person name="Warren W."/>
            <person name="Fulton R."/>
            <person name="Feng D."/>
            <person name="Wollam A."/>
            <person name="Shah N."/>
            <person name="Bhonagiri V."/>
            <person name="Nash W.E."/>
            <person name="Hallsworth-Pepin K."/>
            <person name="Wilson R.K."/>
            <person name="McClelland M."/>
            <person name="Forsythe S.J."/>
        </authorList>
    </citation>
    <scope>NUCLEOTIDE SEQUENCE [LARGE SCALE GENOMIC DNA]</scope>
    <source>
        <strain>ATCC BAA-894</strain>
    </source>
</reference>
<evidence type="ECO:0000255" key="1">
    <source>
        <dbReference type="HAMAP-Rule" id="MF_01039"/>
    </source>
</evidence>
<sequence length="250" mass="28375">MAVTKLVLVRHGESQWNNENRFTGWYDVDLSEKGVSEAKAAGKLLKDEGYSFDFAYTSVLKRAIHTLWNILDGLDQAWLPVEKSWKLNERHYGALQGLNKAETAEKYGDEQVKQWRRGFAVTPPALTKDDERYPGHDPRYAKLSEQELPLTESLALTIDRVIPYWNETILPRLKSGERVIIAAHGNSLRALVKYLDNMSEEEILELNIPTGVPLVYEFDENFKPIKHYYLGNADEIAAKAAAVANQGKAK</sequence>
<organism>
    <name type="scientific">Cronobacter sakazakii (strain ATCC BAA-894)</name>
    <name type="common">Enterobacter sakazakii</name>
    <dbReference type="NCBI Taxonomy" id="290339"/>
    <lineage>
        <taxon>Bacteria</taxon>
        <taxon>Pseudomonadati</taxon>
        <taxon>Pseudomonadota</taxon>
        <taxon>Gammaproteobacteria</taxon>
        <taxon>Enterobacterales</taxon>
        <taxon>Enterobacteriaceae</taxon>
        <taxon>Cronobacter</taxon>
    </lineage>
</organism>
<comment type="function">
    <text evidence="1">Catalyzes the interconversion of 2-phosphoglycerate and 3-phosphoglycerate.</text>
</comment>
<comment type="catalytic activity">
    <reaction evidence="1">
        <text>(2R)-2-phosphoglycerate = (2R)-3-phosphoglycerate</text>
        <dbReference type="Rhea" id="RHEA:15901"/>
        <dbReference type="ChEBI" id="CHEBI:58272"/>
        <dbReference type="ChEBI" id="CHEBI:58289"/>
        <dbReference type="EC" id="5.4.2.11"/>
    </reaction>
</comment>
<comment type="pathway">
    <text evidence="1">Carbohydrate degradation; glycolysis; pyruvate from D-glyceraldehyde 3-phosphate: step 3/5.</text>
</comment>
<comment type="subunit">
    <text evidence="1">Homodimer.</text>
</comment>
<comment type="similarity">
    <text evidence="1">Belongs to the phosphoglycerate mutase family. BPG-dependent PGAM subfamily.</text>
</comment>
<gene>
    <name evidence="1" type="primary">gpmA</name>
    <name type="ordered locus">ESA_02590</name>
</gene>
<accession>A7MIX7</accession>
<keyword id="KW-0312">Gluconeogenesis</keyword>
<keyword id="KW-0324">Glycolysis</keyword>
<keyword id="KW-0413">Isomerase</keyword>
<keyword id="KW-1185">Reference proteome</keyword>
<name>GPMA_CROS8</name>
<proteinExistence type="inferred from homology"/>